<proteinExistence type="evidence at protein level"/>
<protein>
    <recommendedName>
        <fullName>Leucine-rich repeat neuronal protein 4</fullName>
    </recommendedName>
    <alternativeName>
        <fullName>Neuronal leucine-rich repeat protein 4</fullName>
        <shortName>NLRR-4</shortName>
    </alternativeName>
</protein>
<comment type="function">
    <text evidence="4">May play an important role in hippocampus-dependent long-lasting memory.</text>
</comment>
<comment type="subcellular location">
    <subcellularLocation>
        <location evidence="6">Membrane</location>
        <topology evidence="6">Single-pass type I membrane protein</topology>
    </subcellularLocation>
</comment>
<comment type="disruption phenotype">
    <text evidence="4">Mice are viable and fertile, but show impaired memory retention. Lrrn4-deficient mice are able to maintain memories for one day in hippocampus-dependent learning tasks, but are unable to retain memories for four days after learning. In contrast, in hippocampus-independent tasks Lrrn4-deficient mice normally retain memories for at least seven days.</text>
</comment>
<evidence type="ECO:0000255" key="1"/>
<evidence type="ECO:0000255" key="2">
    <source>
        <dbReference type="PROSITE-ProRule" id="PRU00316"/>
    </source>
</evidence>
<evidence type="ECO:0000256" key="3">
    <source>
        <dbReference type="SAM" id="MobiDB-lite"/>
    </source>
</evidence>
<evidence type="ECO:0000269" key="4">
    <source>
    </source>
</evidence>
<evidence type="ECO:0000269" key="5">
    <source>
    </source>
</evidence>
<evidence type="ECO:0000305" key="6"/>
<sequence>MRWTLMLQLLQLLLQLLMAQSQSLERISQDRIPLFRLTQQGDWDSLDRHPTDSLCVGLPAAGVTTLNLANRSLESLPSCLPRTLRSLDGSHNLLRALSEPVLGRLPELRVLTLHHNRISVLHWGRDTLAELRELDLSHNLLTELPPCAGPSGSSLRSLALAGNPLRALLPRTFACFPALRLLNLSCSELGHIAQEAFAGVDGGPLAALELLDLSGTSLERVESGWIRNLPKLKSLFLRKMPRLKTLEGDIFKMTPNLRQLDCGDSPALTSVHTEIFQDTPNLQVLQFQNCNLSSFGPWNSSQVLSVSLFGNPLICSCELAWLLVDVNKTVLHRAADTMCEPALGSTGPFSGPLSLSHLSNVCRSDQSTTLLPSNPGRFDHSVFAPRIQGPSIEQSTALSAQPGGSQQNITKVPSLTMTSPTQGSWMYKDASEETAQSTNSELVYSPSRALPGAASSGAEQTATHILEPNISSASTPLVSKYLEPLPTSPNPRSLPQTKQRTQATPRALHTDPPQDEIPVLLLDDDSEEEETRDQVAAPPQDVSCEYHPCKHLQTPCAELQRRFRCRCPGLSGEDTTPDPPTLQGVSEVTDTSVLVHWCAPNSVVLWYQIHYVAEGRSGNQSVVDIYATARQHPLYKLTPGTTYHVCVLAANRAGLSQSQTSGWRRSCATFTTKPSSVVIFWGLCTASGLLLVSTLVLSVCLWRQRWKPHRQFYDTHLVAFKNPARAEEVTQWE</sequence>
<reference key="1">
    <citation type="journal article" date="2005" name="Science">
        <title>The transcriptional landscape of the mammalian genome.</title>
        <authorList>
            <person name="Carninci P."/>
            <person name="Kasukawa T."/>
            <person name="Katayama S."/>
            <person name="Gough J."/>
            <person name="Frith M.C."/>
            <person name="Maeda N."/>
            <person name="Oyama R."/>
            <person name="Ravasi T."/>
            <person name="Lenhard B."/>
            <person name="Wells C."/>
            <person name="Kodzius R."/>
            <person name="Shimokawa K."/>
            <person name="Bajic V.B."/>
            <person name="Brenner S.E."/>
            <person name="Batalov S."/>
            <person name="Forrest A.R."/>
            <person name="Zavolan M."/>
            <person name="Davis M.J."/>
            <person name="Wilming L.G."/>
            <person name="Aidinis V."/>
            <person name="Allen J.E."/>
            <person name="Ambesi-Impiombato A."/>
            <person name="Apweiler R."/>
            <person name="Aturaliya R.N."/>
            <person name="Bailey T.L."/>
            <person name="Bansal M."/>
            <person name="Baxter L."/>
            <person name="Beisel K.W."/>
            <person name="Bersano T."/>
            <person name="Bono H."/>
            <person name="Chalk A.M."/>
            <person name="Chiu K.P."/>
            <person name="Choudhary V."/>
            <person name="Christoffels A."/>
            <person name="Clutterbuck D.R."/>
            <person name="Crowe M.L."/>
            <person name="Dalla E."/>
            <person name="Dalrymple B.P."/>
            <person name="de Bono B."/>
            <person name="Della Gatta G."/>
            <person name="di Bernardo D."/>
            <person name="Down T."/>
            <person name="Engstrom P."/>
            <person name="Fagiolini M."/>
            <person name="Faulkner G."/>
            <person name="Fletcher C.F."/>
            <person name="Fukushima T."/>
            <person name="Furuno M."/>
            <person name="Futaki S."/>
            <person name="Gariboldi M."/>
            <person name="Georgii-Hemming P."/>
            <person name="Gingeras T.R."/>
            <person name="Gojobori T."/>
            <person name="Green R.E."/>
            <person name="Gustincich S."/>
            <person name="Harbers M."/>
            <person name="Hayashi Y."/>
            <person name="Hensch T.K."/>
            <person name="Hirokawa N."/>
            <person name="Hill D."/>
            <person name="Huminiecki L."/>
            <person name="Iacono M."/>
            <person name="Ikeo K."/>
            <person name="Iwama A."/>
            <person name="Ishikawa T."/>
            <person name="Jakt M."/>
            <person name="Kanapin A."/>
            <person name="Katoh M."/>
            <person name="Kawasawa Y."/>
            <person name="Kelso J."/>
            <person name="Kitamura H."/>
            <person name="Kitano H."/>
            <person name="Kollias G."/>
            <person name="Krishnan S.P."/>
            <person name="Kruger A."/>
            <person name="Kummerfeld S.K."/>
            <person name="Kurochkin I.V."/>
            <person name="Lareau L.F."/>
            <person name="Lazarevic D."/>
            <person name="Lipovich L."/>
            <person name="Liu J."/>
            <person name="Liuni S."/>
            <person name="McWilliam S."/>
            <person name="Madan Babu M."/>
            <person name="Madera M."/>
            <person name="Marchionni L."/>
            <person name="Matsuda H."/>
            <person name="Matsuzawa S."/>
            <person name="Miki H."/>
            <person name="Mignone F."/>
            <person name="Miyake S."/>
            <person name="Morris K."/>
            <person name="Mottagui-Tabar S."/>
            <person name="Mulder N."/>
            <person name="Nakano N."/>
            <person name="Nakauchi H."/>
            <person name="Ng P."/>
            <person name="Nilsson R."/>
            <person name="Nishiguchi S."/>
            <person name="Nishikawa S."/>
            <person name="Nori F."/>
            <person name="Ohara O."/>
            <person name="Okazaki Y."/>
            <person name="Orlando V."/>
            <person name="Pang K.C."/>
            <person name="Pavan W.J."/>
            <person name="Pavesi G."/>
            <person name="Pesole G."/>
            <person name="Petrovsky N."/>
            <person name="Piazza S."/>
            <person name="Reed J."/>
            <person name="Reid J.F."/>
            <person name="Ring B.Z."/>
            <person name="Ringwald M."/>
            <person name="Rost B."/>
            <person name="Ruan Y."/>
            <person name="Salzberg S.L."/>
            <person name="Sandelin A."/>
            <person name="Schneider C."/>
            <person name="Schoenbach C."/>
            <person name="Sekiguchi K."/>
            <person name="Semple C.A."/>
            <person name="Seno S."/>
            <person name="Sessa L."/>
            <person name="Sheng Y."/>
            <person name="Shibata Y."/>
            <person name="Shimada H."/>
            <person name="Shimada K."/>
            <person name="Silva D."/>
            <person name="Sinclair B."/>
            <person name="Sperling S."/>
            <person name="Stupka E."/>
            <person name="Sugiura K."/>
            <person name="Sultana R."/>
            <person name="Takenaka Y."/>
            <person name="Taki K."/>
            <person name="Tammoja K."/>
            <person name="Tan S.L."/>
            <person name="Tang S."/>
            <person name="Taylor M.S."/>
            <person name="Tegner J."/>
            <person name="Teichmann S.A."/>
            <person name="Ueda H.R."/>
            <person name="van Nimwegen E."/>
            <person name="Verardo R."/>
            <person name="Wei C.L."/>
            <person name="Yagi K."/>
            <person name="Yamanishi H."/>
            <person name="Zabarovsky E."/>
            <person name="Zhu S."/>
            <person name="Zimmer A."/>
            <person name="Hide W."/>
            <person name="Bult C."/>
            <person name="Grimmond S.M."/>
            <person name="Teasdale R.D."/>
            <person name="Liu E.T."/>
            <person name="Brusic V."/>
            <person name="Quackenbush J."/>
            <person name="Wahlestedt C."/>
            <person name="Mattick J.S."/>
            <person name="Hume D.A."/>
            <person name="Kai C."/>
            <person name="Sasaki D."/>
            <person name="Tomaru Y."/>
            <person name="Fukuda S."/>
            <person name="Kanamori-Katayama M."/>
            <person name="Suzuki M."/>
            <person name="Aoki J."/>
            <person name="Arakawa T."/>
            <person name="Iida J."/>
            <person name="Imamura K."/>
            <person name="Itoh M."/>
            <person name="Kato T."/>
            <person name="Kawaji H."/>
            <person name="Kawagashira N."/>
            <person name="Kawashima T."/>
            <person name="Kojima M."/>
            <person name="Kondo S."/>
            <person name="Konno H."/>
            <person name="Nakano K."/>
            <person name="Ninomiya N."/>
            <person name="Nishio T."/>
            <person name="Okada M."/>
            <person name="Plessy C."/>
            <person name="Shibata K."/>
            <person name="Shiraki T."/>
            <person name="Suzuki S."/>
            <person name="Tagami M."/>
            <person name="Waki K."/>
            <person name="Watahiki A."/>
            <person name="Okamura-Oho Y."/>
            <person name="Suzuki H."/>
            <person name="Kawai J."/>
            <person name="Hayashizaki Y."/>
        </authorList>
    </citation>
    <scope>NUCLEOTIDE SEQUENCE [LARGE SCALE MRNA]</scope>
    <source>
        <strain>C57BL/6J</strain>
        <tissue>Adipose tissue</tissue>
        <tissue>Stomach</tissue>
    </source>
</reference>
<reference key="2">
    <citation type="journal article" date="2009" name="PLoS Biol.">
        <title>Lineage-specific biology revealed by a finished genome assembly of the mouse.</title>
        <authorList>
            <person name="Church D.M."/>
            <person name="Goodstadt L."/>
            <person name="Hillier L.W."/>
            <person name="Zody M.C."/>
            <person name="Goldstein S."/>
            <person name="She X."/>
            <person name="Bult C.J."/>
            <person name="Agarwala R."/>
            <person name="Cherry J.L."/>
            <person name="DiCuccio M."/>
            <person name="Hlavina W."/>
            <person name="Kapustin Y."/>
            <person name="Meric P."/>
            <person name="Maglott D."/>
            <person name="Birtle Z."/>
            <person name="Marques A.C."/>
            <person name="Graves T."/>
            <person name="Zhou S."/>
            <person name="Teague B."/>
            <person name="Potamousis K."/>
            <person name="Churas C."/>
            <person name="Place M."/>
            <person name="Herschleb J."/>
            <person name="Runnheim R."/>
            <person name="Forrest D."/>
            <person name="Amos-Landgraf J."/>
            <person name="Schwartz D.C."/>
            <person name="Cheng Z."/>
            <person name="Lindblad-Toh K."/>
            <person name="Eichler E.E."/>
            <person name="Ponting C.P."/>
        </authorList>
    </citation>
    <scope>NUCLEOTIDE SEQUENCE [LARGE SCALE GENOMIC DNA]</scope>
    <source>
        <strain>C57BL/6J</strain>
    </source>
</reference>
<reference key="3">
    <citation type="journal article" date="2005" name="Mol. Cell. Biol.">
        <title>Neuronal leucine-rich repeat protein 4 functions in hippocampus-dependent long-lasting memory.</title>
        <authorList>
            <person name="Bando T."/>
            <person name="Sekine K."/>
            <person name="Kobayashi S."/>
            <person name="Watabe A.M."/>
            <person name="Rump A."/>
            <person name="Tanaka M."/>
            <person name="Suda Y."/>
            <person name="Kato S."/>
            <person name="Morikawa Y."/>
            <person name="Manabe T."/>
            <person name="Miyajima A."/>
        </authorList>
    </citation>
    <scope>FUNCTION</scope>
    <scope>DISRUPTION PHENOTYPE</scope>
</reference>
<reference key="4">
    <citation type="journal article" date="2009" name="Nat. Biotechnol.">
        <title>Mass-spectrometric identification and relative quantification of N-linked cell surface glycoproteins.</title>
        <authorList>
            <person name="Wollscheid B."/>
            <person name="Bausch-Fluck D."/>
            <person name="Henderson C."/>
            <person name="O'Brien R."/>
            <person name="Bibel M."/>
            <person name="Schiess R."/>
            <person name="Aebersold R."/>
            <person name="Watts J.D."/>
        </authorList>
    </citation>
    <scope>GLYCOSYLATION [LARGE SCALE ANALYSIS] AT ASN-619</scope>
</reference>
<name>LRRN4_MOUSE</name>
<keyword id="KW-0325">Glycoprotein</keyword>
<keyword id="KW-0433">Leucine-rich repeat</keyword>
<keyword id="KW-0472">Membrane</keyword>
<keyword id="KW-1185">Reference proteome</keyword>
<keyword id="KW-0677">Repeat</keyword>
<keyword id="KW-0732">Signal</keyword>
<keyword id="KW-0812">Transmembrane</keyword>
<keyword id="KW-1133">Transmembrane helix</keyword>
<accession>P59383</accession>
<accession>A2ANX0</accession>
<gene>
    <name type="primary">Lrrn4</name>
</gene>
<feature type="signal peptide" evidence="1">
    <location>
        <begin position="1"/>
        <end position="19"/>
    </location>
</feature>
<feature type="chain" id="PRO_0000021030" description="Leucine-rich repeat neuronal protein 4">
    <location>
        <begin position="20"/>
        <end position="733"/>
    </location>
</feature>
<feature type="topological domain" description="Extracellular" evidence="1">
    <location>
        <begin position="20"/>
        <end position="676"/>
    </location>
</feature>
<feature type="transmembrane region" description="Helical" evidence="1">
    <location>
        <begin position="677"/>
        <end position="697"/>
    </location>
</feature>
<feature type="topological domain" description="Cytoplasmic" evidence="1">
    <location>
        <begin position="698"/>
        <end position="733"/>
    </location>
</feature>
<feature type="repeat" description="LRR 1">
    <location>
        <begin position="62"/>
        <end position="82"/>
    </location>
</feature>
<feature type="repeat" description="LRR 2">
    <location>
        <begin position="83"/>
        <end position="106"/>
    </location>
</feature>
<feature type="repeat" description="LRR 3">
    <location>
        <begin position="107"/>
        <end position="128"/>
    </location>
</feature>
<feature type="repeat" description="LRR 4">
    <location>
        <begin position="130"/>
        <end position="151"/>
    </location>
</feature>
<feature type="repeat" description="LRR 5">
    <location>
        <begin position="154"/>
        <end position="175"/>
    </location>
</feature>
<feature type="repeat" description="LRR 6">
    <location>
        <begin position="178"/>
        <end position="199"/>
    </location>
</feature>
<feature type="repeat" description="LRR 7">
    <location>
        <begin position="207"/>
        <end position="230"/>
    </location>
</feature>
<feature type="repeat" description="LRR 8">
    <location>
        <begin position="231"/>
        <end position="253"/>
    </location>
</feature>
<feature type="repeat" description="LRR 9">
    <location>
        <begin position="256"/>
        <end position="278"/>
    </location>
</feature>
<feature type="repeat" description="LRR 10">
    <location>
        <begin position="281"/>
        <end position="302"/>
    </location>
</feature>
<feature type="domain" description="LRRCT">
    <location>
        <begin position="311"/>
        <end position="364"/>
    </location>
</feature>
<feature type="domain" description="Fibronectin type-III" evidence="2">
    <location>
        <begin position="576"/>
        <end position="675"/>
    </location>
</feature>
<feature type="region of interest" description="Disordered" evidence="3">
    <location>
        <begin position="395"/>
        <end position="423"/>
    </location>
</feature>
<feature type="region of interest" description="Disordered" evidence="3">
    <location>
        <begin position="480"/>
        <end position="518"/>
    </location>
</feature>
<feature type="compositionally biased region" description="Polar residues" evidence="3">
    <location>
        <begin position="490"/>
        <end position="504"/>
    </location>
</feature>
<feature type="glycosylation site" description="N-linked (GlcNAc...) asparagine" evidence="1">
    <location>
        <position position="70"/>
    </location>
</feature>
<feature type="glycosylation site" description="N-linked (GlcNAc...) asparagine" evidence="1">
    <location>
        <position position="183"/>
    </location>
</feature>
<feature type="glycosylation site" description="N-linked (GlcNAc...) asparagine" evidence="1">
    <location>
        <position position="291"/>
    </location>
</feature>
<feature type="glycosylation site" description="N-linked (GlcNAc...) asparagine" evidence="1">
    <location>
        <position position="299"/>
    </location>
</feature>
<feature type="glycosylation site" description="N-linked (GlcNAc...) asparagine" evidence="1">
    <location>
        <position position="327"/>
    </location>
</feature>
<feature type="glycosylation site" description="N-linked (GlcNAc...) asparagine" evidence="1">
    <location>
        <position position="408"/>
    </location>
</feature>
<feature type="glycosylation site" description="N-linked (GlcNAc...) asparagine" evidence="1">
    <location>
        <position position="469"/>
    </location>
</feature>
<feature type="glycosylation site" description="N-linked (GlcNAc...) asparagine" evidence="5">
    <location>
        <position position="619"/>
    </location>
</feature>
<feature type="sequence conflict" description="In Ref. 1; BAC39399." evidence="6" ref="1">
    <original>S</original>
    <variation>G</variation>
    <location>
        <position position="316"/>
    </location>
</feature>
<organism>
    <name type="scientific">Mus musculus</name>
    <name type="common">Mouse</name>
    <dbReference type="NCBI Taxonomy" id="10090"/>
    <lineage>
        <taxon>Eukaryota</taxon>
        <taxon>Metazoa</taxon>
        <taxon>Chordata</taxon>
        <taxon>Craniata</taxon>
        <taxon>Vertebrata</taxon>
        <taxon>Euteleostomi</taxon>
        <taxon>Mammalia</taxon>
        <taxon>Eutheria</taxon>
        <taxon>Euarchontoglires</taxon>
        <taxon>Glires</taxon>
        <taxon>Rodentia</taxon>
        <taxon>Myomorpha</taxon>
        <taxon>Muroidea</taxon>
        <taxon>Muridae</taxon>
        <taxon>Murinae</taxon>
        <taxon>Mus</taxon>
        <taxon>Mus</taxon>
    </lineage>
</organism>
<dbReference type="EMBL" id="AK085246">
    <property type="protein sequence ID" value="BAC39399.1"/>
    <property type="molecule type" value="mRNA"/>
</dbReference>
<dbReference type="EMBL" id="AK080889">
    <property type="protein sequence ID" value="BAC38065.1"/>
    <property type="molecule type" value="mRNA"/>
</dbReference>
<dbReference type="EMBL" id="AL831763">
    <property type="status" value="NOT_ANNOTATED_CDS"/>
    <property type="molecule type" value="Genomic_DNA"/>
</dbReference>
<dbReference type="EMBL" id="AL929562">
    <property type="status" value="NOT_ANNOTATED_CDS"/>
    <property type="molecule type" value="Genomic_DNA"/>
</dbReference>
<dbReference type="CCDS" id="CCDS16780.1"/>
<dbReference type="RefSeq" id="NP_796277.2">
    <property type="nucleotide sequence ID" value="NM_177303.4"/>
</dbReference>
<dbReference type="RefSeq" id="XP_011237904.1">
    <property type="nucleotide sequence ID" value="XM_011239602.3"/>
</dbReference>
<dbReference type="SMR" id="P59383"/>
<dbReference type="FunCoup" id="P59383">
    <property type="interactions" value="649"/>
</dbReference>
<dbReference type="STRING" id="10090.ENSMUSP00000057005"/>
<dbReference type="GlyCosmos" id="P59383">
    <property type="glycosylation" value="8 sites, No reported glycans"/>
</dbReference>
<dbReference type="GlyGen" id="P59383">
    <property type="glycosylation" value="8 sites"/>
</dbReference>
<dbReference type="iPTMnet" id="P59383"/>
<dbReference type="PhosphoSitePlus" id="P59383"/>
<dbReference type="PaxDb" id="10090-ENSMUSP00000057005"/>
<dbReference type="ProteomicsDB" id="290175"/>
<dbReference type="Antibodypedia" id="2410">
    <property type="antibodies" value="156 antibodies from 23 providers"/>
</dbReference>
<dbReference type="DNASU" id="320974"/>
<dbReference type="Ensembl" id="ENSMUST00000049787.3">
    <property type="protein sequence ID" value="ENSMUSP00000057005.3"/>
    <property type="gene ID" value="ENSMUSG00000043110.3"/>
</dbReference>
<dbReference type="GeneID" id="320974"/>
<dbReference type="KEGG" id="mmu:320974"/>
<dbReference type="UCSC" id="uc008mnn.1">
    <property type="organism name" value="mouse"/>
</dbReference>
<dbReference type="AGR" id="MGI:2445154"/>
<dbReference type="CTD" id="164312"/>
<dbReference type="MGI" id="MGI:2445154">
    <property type="gene designation" value="Lrrn4"/>
</dbReference>
<dbReference type="VEuPathDB" id="HostDB:ENSMUSG00000043110"/>
<dbReference type="eggNOG" id="KOG0619">
    <property type="taxonomic scope" value="Eukaryota"/>
</dbReference>
<dbReference type="GeneTree" id="ENSGT00940000161448"/>
<dbReference type="HOGENOM" id="CLU_022697_0_0_1"/>
<dbReference type="InParanoid" id="P59383"/>
<dbReference type="OMA" id="LTQQGPW"/>
<dbReference type="OrthoDB" id="676979at2759"/>
<dbReference type="PhylomeDB" id="P59383"/>
<dbReference type="TreeFam" id="TF351118"/>
<dbReference type="BioGRID-ORCS" id="320974">
    <property type="hits" value="1 hit in 78 CRISPR screens"/>
</dbReference>
<dbReference type="ChiTaRS" id="Lrrn4">
    <property type="organism name" value="mouse"/>
</dbReference>
<dbReference type="PRO" id="PR:P59383"/>
<dbReference type="Proteomes" id="UP000000589">
    <property type="component" value="Chromosome 2"/>
</dbReference>
<dbReference type="RNAct" id="P59383">
    <property type="molecule type" value="protein"/>
</dbReference>
<dbReference type="Bgee" id="ENSMUSG00000043110">
    <property type="expression patterns" value="Expressed in pleural cavity and 97 other cell types or tissues"/>
</dbReference>
<dbReference type="GO" id="GO:0005886">
    <property type="term" value="C:plasma membrane"/>
    <property type="evidence" value="ECO:0000314"/>
    <property type="project" value="MGI"/>
</dbReference>
<dbReference type="GO" id="GO:0007616">
    <property type="term" value="P:long-term memory"/>
    <property type="evidence" value="ECO:0000315"/>
    <property type="project" value="MGI"/>
</dbReference>
<dbReference type="GO" id="GO:0008542">
    <property type="term" value="P:visual learning"/>
    <property type="evidence" value="ECO:0000315"/>
    <property type="project" value="MGI"/>
</dbReference>
<dbReference type="CDD" id="cd00063">
    <property type="entry name" value="FN3"/>
    <property type="match status" value="1"/>
</dbReference>
<dbReference type="Gene3D" id="2.60.40.10">
    <property type="entry name" value="Immunoglobulins"/>
    <property type="match status" value="1"/>
</dbReference>
<dbReference type="Gene3D" id="3.80.10.10">
    <property type="entry name" value="Ribonuclease Inhibitor"/>
    <property type="match status" value="2"/>
</dbReference>
<dbReference type="InterPro" id="IPR003961">
    <property type="entry name" value="FN3_dom"/>
</dbReference>
<dbReference type="InterPro" id="IPR036116">
    <property type="entry name" value="FN3_sf"/>
</dbReference>
<dbReference type="InterPro" id="IPR013783">
    <property type="entry name" value="Ig-like_fold"/>
</dbReference>
<dbReference type="InterPro" id="IPR001611">
    <property type="entry name" value="Leu-rich_rpt"/>
</dbReference>
<dbReference type="InterPro" id="IPR003591">
    <property type="entry name" value="Leu-rich_rpt_typical-subtyp"/>
</dbReference>
<dbReference type="InterPro" id="IPR032675">
    <property type="entry name" value="LRR_dom_sf"/>
</dbReference>
<dbReference type="PANTHER" id="PTHR24366">
    <property type="entry name" value="IG(IMMUNOGLOBULIN) AND LRR(LEUCINE RICH REPEAT) DOMAINS"/>
    <property type="match status" value="1"/>
</dbReference>
<dbReference type="PANTHER" id="PTHR24366:SF13">
    <property type="entry name" value="LEUCINE-RICH REPEAT NEURONAL PROTEIN 4"/>
    <property type="match status" value="1"/>
</dbReference>
<dbReference type="Pfam" id="PF00041">
    <property type="entry name" value="fn3"/>
    <property type="match status" value="1"/>
</dbReference>
<dbReference type="Pfam" id="PF13855">
    <property type="entry name" value="LRR_8"/>
    <property type="match status" value="1"/>
</dbReference>
<dbReference type="SMART" id="SM00060">
    <property type="entry name" value="FN3"/>
    <property type="match status" value="1"/>
</dbReference>
<dbReference type="SMART" id="SM00369">
    <property type="entry name" value="LRR_TYP"/>
    <property type="match status" value="6"/>
</dbReference>
<dbReference type="SUPFAM" id="SSF49265">
    <property type="entry name" value="Fibronectin type III"/>
    <property type="match status" value="1"/>
</dbReference>
<dbReference type="SUPFAM" id="SSF52058">
    <property type="entry name" value="L domain-like"/>
    <property type="match status" value="1"/>
</dbReference>
<dbReference type="PROSITE" id="PS50853">
    <property type="entry name" value="FN3"/>
    <property type="match status" value="1"/>
</dbReference>
<dbReference type="PROSITE" id="PS51450">
    <property type="entry name" value="LRR"/>
    <property type="match status" value="6"/>
</dbReference>